<comment type="function">
    <text evidence="1">This is one of the proteins that binds to the 5S RNA in the ribosome where it forms part of the central protuberance.</text>
</comment>
<comment type="subunit">
    <text evidence="1">Part of the 50S ribosomal subunit; part of the 5S rRNA/L5/L18/L25 subcomplex. Contacts the 5S rRNA. Binds to the 5S rRNA independently of L5 and L18.</text>
</comment>
<comment type="similarity">
    <text evidence="1">Belongs to the bacterial ribosomal protein bL25 family.</text>
</comment>
<accession>B0TZF1</accession>
<gene>
    <name evidence="1" type="primary">rplY</name>
    <name type="ordered locus">Fphi_1580</name>
</gene>
<keyword id="KW-0687">Ribonucleoprotein</keyword>
<keyword id="KW-0689">Ribosomal protein</keyword>
<keyword id="KW-0694">RNA-binding</keyword>
<keyword id="KW-0699">rRNA-binding</keyword>
<dbReference type="EMBL" id="CP000937">
    <property type="protein sequence ID" value="ABZ87804.1"/>
    <property type="molecule type" value="Genomic_DNA"/>
</dbReference>
<dbReference type="SMR" id="B0TZF1"/>
<dbReference type="KEGG" id="fph:Fphi_1580"/>
<dbReference type="eggNOG" id="COG1825">
    <property type="taxonomic scope" value="Bacteria"/>
</dbReference>
<dbReference type="HOGENOM" id="CLU_137946_0_0_6"/>
<dbReference type="GO" id="GO:0022625">
    <property type="term" value="C:cytosolic large ribosomal subunit"/>
    <property type="evidence" value="ECO:0007669"/>
    <property type="project" value="TreeGrafter"/>
</dbReference>
<dbReference type="GO" id="GO:0008097">
    <property type="term" value="F:5S rRNA binding"/>
    <property type="evidence" value="ECO:0007669"/>
    <property type="project" value="InterPro"/>
</dbReference>
<dbReference type="GO" id="GO:0003735">
    <property type="term" value="F:structural constituent of ribosome"/>
    <property type="evidence" value="ECO:0007669"/>
    <property type="project" value="InterPro"/>
</dbReference>
<dbReference type="GO" id="GO:0006412">
    <property type="term" value="P:translation"/>
    <property type="evidence" value="ECO:0007669"/>
    <property type="project" value="UniProtKB-UniRule"/>
</dbReference>
<dbReference type="CDD" id="cd00495">
    <property type="entry name" value="Ribosomal_L25_TL5_CTC"/>
    <property type="match status" value="1"/>
</dbReference>
<dbReference type="FunFam" id="2.40.240.10:FF:000002">
    <property type="entry name" value="50S ribosomal protein L25"/>
    <property type="match status" value="1"/>
</dbReference>
<dbReference type="Gene3D" id="2.40.240.10">
    <property type="entry name" value="Ribosomal Protein L25, Chain P"/>
    <property type="match status" value="1"/>
</dbReference>
<dbReference type="HAMAP" id="MF_01336">
    <property type="entry name" value="Ribosomal_bL25"/>
    <property type="match status" value="1"/>
</dbReference>
<dbReference type="InterPro" id="IPR020056">
    <property type="entry name" value="Rbsml_bL25/Gln-tRNA_synth_N"/>
</dbReference>
<dbReference type="InterPro" id="IPR011035">
    <property type="entry name" value="Ribosomal_bL25/Gln-tRNA_synth"/>
</dbReference>
<dbReference type="InterPro" id="IPR001021">
    <property type="entry name" value="Ribosomal_bL25_long"/>
</dbReference>
<dbReference type="InterPro" id="IPR020055">
    <property type="entry name" value="Ribosomal_bL25_short"/>
</dbReference>
<dbReference type="InterPro" id="IPR029751">
    <property type="entry name" value="Ribosomal_L25_dom"/>
</dbReference>
<dbReference type="InterPro" id="IPR020930">
    <property type="entry name" value="Ribosomal_uL5_bac-type"/>
</dbReference>
<dbReference type="NCBIfam" id="TIGR00731">
    <property type="entry name" value="bL25_bact_ctc"/>
    <property type="match status" value="1"/>
</dbReference>
<dbReference type="NCBIfam" id="NF004612">
    <property type="entry name" value="PRK05943.1"/>
    <property type="match status" value="1"/>
</dbReference>
<dbReference type="PANTHER" id="PTHR33284">
    <property type="entry name" value="RIBOSOMAL PROTEIN L25/GLN-TRNA SYNTHETASE, ANTI-CODON-BINDING DOMAIN-CONTAINING PROTEIN"/>
    <property type="match status" value="1"/>
</dbReference>
<dbReference type="PANTHER" id="PTHR33284:SF1">
    <property type="entry name" value="RIBOSOMAL PROTEIN L25_GLN-TRNA SYNTHETASE, ANTI-CODON-BINDING DOMAIN-CONTAINING PROTEIN"/>
    <property type="match status" value="1"/>
</dbReference>
<dbReference type="Pfam" id="PF01386">
    <property type="entry name" value="Ribosomal_L25p"/>
    <property type="match status" value="1"/>
</dbReference>
<dbReference type="SUPFAM" id="SSF50715">
    <property type="entry name" value="Ribosomal protein L25-like"/>
    <property type="match status" value="1"/>
</dbReference>
<reference key="1">
    <citation type="submission" date="2007-12" db="EMBL/GenBank/DDBJ databases">
        <title>Complete sequence of chromosome of Francisella philomiragia subsp. philomiragia ATCC 25017.</title>
        <authorList>
            <consortium name="US DOE Joint Genome Institute"/>
            <person name="Copeland A."/>
            <person name="Lucas S."/>
            <person name="Lapidus A."/>
            <person name="Barry K."/>
            <person name="Detter J.C."/>
            <person name="Glavina del Rio T."/>
            <person name="Hammon N."/>
            <person name="Israni S."/>
            <person name="Dalin E."/>
            <person name="Tice H."/>
            <person name="Pitluck S."/>
            <person name="Chain P."/>
            <person name="Malfatti S."/>
            <person name="Shin M."/>
            <person name="Vergez L."/>
            <person name="Schmutz J."/>
            <person name="Larimer F."/>
            <person name="Land M."/>
            <person name="Hauser L."/>
            <person name="Richardson P."/>
        </authorList>
    </citation>
    <scope>NUCLEOTIDE SEQUENCE [LARGE SCALE GENOMIC DNA]</scope>
    <source>
        <strain>ATCC 25017 / CCUG 19701 / FSC 153 / O#319-036</strain>
    </source>
</reference>
<name>RL25_FRAP2</name>
<feature type="chain" id="PRO_1000086639" description="Large ribosomal subunit protein bL25">
    <location>
        <begin position="1"/>
        <end position="96"/>
    </location>
</feature>
<proteinExistence type="inferred from homology"/>
<sequence>MANFSLKAVKREDLGSGASRRLRRAGKIPAVIYGGDKEAVSIVLDHDKVLHSTEDKAFFSSEITLEIDGQEERVIIKALQRHPYKVKLVHADFMRV</sequence>
<organism>
    <name type="scientific">Francisella philomiragia subsp. philomiragia (strain ATCC 25017 / CCUG 19701 / FSC 153 / O#319-036)</name>
    <dbReference type="NCBI Taxonomy" id="484022"/>
    <lineage>
        <taxon>Bacteria</taxon>
        <taxon>Pseudomonadati</taxon>
        <taxon>Pseudomonadota</taxon>
        <taxon>Gammaproteobacteria</taxon>
        <taxon>Thiotrichales</taxon>
        <taxon>Francisellaceae</taxon>
        <taxon>Francisella</taxon>
    </lineage>
</organism>
<evidence type="ECO:0000255" key="1">
    <source>
        <dbReference type="HAMAP-Rule" id="MF_01336"/>
    </source>
</evidence>
<evidence type="ECO:0000305" key="2"/>
<protein>
    <recommendedName>
        <fullName evidence="1">Large ribosomal subunit protein bL25</fullName>
    </recommendedName>
    <alternativeName>
        <fullName evidence="2">50S ribosomal protein L25</fullName>
    </alternativeName>
</protein>